<sequence>MGQKINPLGFRLGTTQSHRSFWFAQPKNYSKGLQEDEKIRDCIKNYVQKHMRISSGFEGIARIDIKKRIDLIQVIIHIGFANMLMEGRARGIEELQTNVQKSFHSVNRRLNIAIARVARPYGQPNILAEYIALQLKNRVSFRKAMKKAIELAEQADAKGIQVQIAGRLNGNEIARVEWIREGRVPLQTIRVKIDHCSYPVRTIYGVLGIKIWIFLDEE</sequence>
<comment type="subunit">
    <text evidence="1">Part of the 30S ribosomal subunit.</text>
</comment>
<comment type="subcellular location">
    <subcellularLocation>
        <location>Plastid</location>
        <location>Chloroplast</location>
    </subcellularLocation>
</comment>
<comment type="similarity">
    <text evidence="2">Belongs to the universal ribosomal protein uS3 family.</text>
</comment>
<keyword id="KW-0150">Chloroplast</keyword>
<keyword id="KW-0934">Plastid</keyword>
<keyword id="KW-0687">Ribonucleoprotein</keyword>
<keyword id="KW-0689">Ribosomal protein</keyword>
<keyword id="KW-0694">RNA-binding</keyword>
<keyword id="KW-0699">rRNA-binding</keyword>
<protein>
    <recommendedName>
        <fullName evidence="2">Small ribosomal subunit protein uS3c</fullName>
    </recommendedName>
    <alternativeName>
        <fullName>30S ribosomal protein S3, chloroplastic</fullName>
    </alternativeName>
</protein>
<geneLocation type="chloroplast"/>
<proteinExistence type="inferred from homology"/>
<gene>
    <name type="primary">rps3</name>
</gene>
<organism>
    <name type="scientific">Nymphaea alba</name>
    <name type="common">White water-lily</name>
    <name type="synonym">Castalia alba</name>
    <dbReference type="NCBI Taxonomy" id="34301"/>
    <lineage>
        <taxon>Eukaryota</taxon>
        <taxon>Viridiplantae</taxon>
        <taxon>Streptophyta</taxon>
        <taxon>Embryophyta</taxon>
        <taxon>Tracheophyta</taxon>
        <taxon>Spermatophyta</taxon>
        <taxon>Magnoliopsida</taxon>
        <taxon>Nymphaeales</taxon>
        <taxon>Nymphaeaceae</taxon>
        <taxon>Nymphaea</taxon>
    </lineage>
</organism>
<feature type="chain" id="PRO_0000130291" description="Small ribosomal subunit protein uS3c">
    <location>
        <begin position="1"/>
        <end position="218"/>
    </location>
</feature>
<feature type="domain" description="KH type-2">
    <location>
        <begin position="47"/>
        <end position="118"/>
    </location>
</feature>
<evidence type="ECO:0000250" key="1"/>
<evidence type="ECO:0000305" key="2"/>
<reference key="1">
    <citation type="journal article" date="2004" name="Mol. Biol. Evol.">
        <title>The chloroplast genome of Nymphaea alba: whole-genome analyses and the problem of identifying the most basal angiosperm.</title>
        <authorList>
            <person name="Goremykin V.V."/>
            <person name="Hirsch-Ernst K.I."/>
            <person name="Woelfl S."/>
            <person name="Hellwig F.H."/>
        </authorList>
    </citation>
    <scope>NUCLEOTIDE SEQUENCE [LARGE SCALE GENOMIC DNA]</scope>
</reference>
<accession>Q6EW13</accession>
<dbReference type="EMBL" id="AJ627251">
    <property type="protein sequence ID" value="CAF28633.1"/>
    <property type="molecule type" value="Genomic_DNA"/>
</dbReference>
<dbReference type="RefSeq" id="YP_053193.1">
    <property type="nucleotide sequence ID" value="NC_006050.1"/>
</dbReference>
<dbReference type="SMR" id="Q6EW13"/>
<dbReference type="GeneID" id="2896214"/>
<dbReference type="GO" id="GO:0009507">
    <property type="term" value="C:chloroplast"/>
    <property type="evidence" value="ECO:0007669"/>
    <property type="project" value="UniProtKB-SubCell"/>
</dbReference>
<dbReference type="GO" id="GO:0022627">
    <property type="term" value="C:cytosolic small ribosomal subunit"/>
    <property type="evidence" value="ECO:0007669"/>
    <property type="project" value="TreeGrafter"/>
</dbReference>
<dbReference type="GO" id="GO:0019843">
    <property type="term" value="F:rRNA binding"/>
    <property type="evidence" value="ECO:0007669"/>
    <property type="project" value="UniProtKB-KW"/>
</dbReference>
<dbReference type="GO" id="GO:0003735">
    <property type="term" value="F:structural constituent of ribosome"/>
    <property type="evidence" value="ECO:0007669"/>
    <property type="project" value="InterPro"/>
</dbReference>
<dbReference type="GO" id="GO:0006412">
    <property type="term" value="P:translation"/>
    <property type="evidence" value="ECO:0007669"/>
    <property type="project" value="UniProtKB-UniRule"/>
</dbReference>
<dbReference type="CDD" id="cd02412">
    <property type="entry name" value="KH-II_30S_S3"/>
    <property type="match status" value="1"/>
</dbReference>
<dbReference type="FunFam" id="3.30.1140.32:FF:000003">
    <property type="entry name" value="30S ribosomal protein S3, chloroplastic"/>
    <property type="match status" value="1"/>
</dbReference>
<dbReference type="FunFam" id="3.30.300.20:FF:000008">
    <property type="entry name" value="30S ribosomal protein S3, chloroplastic"/>
    <property type="match status" value="1"/>
</dbReference>
<dbReference type="Gene3D" id="3.30.300.20">
    <property type="match status" value="1"/>
</dbReference>
<dbReference type="Gene3D" id="3.30.1140.32">
    <property type="entry name" value="Ribosomal protein S3, C-terminal domain"/>
    <property type="match status" value="1"/>
</dbReference>
<dbReference type="HAMAP" id="MF_01309_B">
    <property type="entry name" value="Ribosomal_uS3_B"/>
    <property type="match status" value="1"/>
</dbReference>
<dbReference type="InterPro" id="IPR015946">
    <property type="entry name" value="KH_dom-like_a/b"/>
</dbReference>
<dbReference type="InterPro" id="IPR009019">
    <property type="entry name" value="KH_sf_prok-type"/>
</dbReference>
<dbReference type="InterPro" id="IPR036419">
    <property type="entry name" value="Ribosomal_S3_C_sf"/>
</dbReference>
<dbReference type="InterPro" id="IPR005704">
    <property type="entry name" value="Ribosomal_uS3_bac-typ"/>
</dbReference>
<dbReference type="InterPro" id="IPR001351">
    <property type="entry name" value="Ribosomal_uS3_C"/>
</dbReference>
<dbReference type="InterPro" id="IPR018280">
    <property type="entry name" value="Ribosomal_uS3_CS"/>
</dbReference>
<dbReference type="NCBIfam" id="TIGR01009">
    <property type="entry name" value="rpsC_bact"/>
    <property type="match status" value="1"/>
</dbReference>
<dbReference type="PANTHER" id="PTHR11760">
    <property type="entry name" value="30S/40S RIBOSOMAL PROTEIN S3"/>
    <property type="match status" value="1"/>
</dbReference>
<dbReference type="PANTHER" id="PTHR11760:SF19">
    <property type="entry name" value="SMALL RIBOSOMAL SUBUNIT PROTEIN US3C"/>
    <property type="match status" value="1"/>
</dbReference>
<dbReference type="Pfam" id="PF00189">
    <property type="entry name" value="Ribosomal_S3_C"/>
    <property type="match status" value="1"/>
</dbReference>
<dbReference type="SUPFAM" id="SSF54814">
    <property type="entry name" value="Prokaryotic type KH domain (KH-domain type II)"/>
    <property type="match status" value="1"/>
</dbReference>
<dbReference type="SUPFAM" id="SSF54821">
    <property type="entry name" value="Ribosomal protein S3 C-terminal domain"/>
    <property type="match status" value="1"/>
</dbReference>
<dbReference type="PROSITE" id="PS00548">
    <property type="entry name" value="RIBOSOMAL_S3"/>
    <property type="match status" value="1"/>
</dbReference>
<name>RR3_NYMAL</name>